<protein>
    <recommendedName>
        <fullName>Alpha-L-arabinofuranosidase axhA</fullName>
        <ecNumber>3.2.1.55</ecNumber>
    </recommendedName>
    <alternativeName>
        <fullName>Arabinoxylan arabinofuranohydrolase axhA</fullName>
    </alternativeName>
</protein>
<reference key="1">
    <citation type="journal article" date="1997" name="Curr. Genet.">
        <title>Arabinoxylan degradation by fungi: characterization of the arabinoxylan-arabinofuranohydrolase encoding genes from Aspergillus niger and Aspergillus tubingensis.</title>
        <authorList>
            <person name="Gielkens M.M.C."/>
            <person name="Visser J."/>
            <person name="de Graaff L.H."/>
        </authorList>
    </citation>
    <scope>NUCLEOTIDE SEQUENCE [GENOMIC DNA]</scope>
    <scope>SUBCELLULAR LOCATION</scope>
    <scope>INDUCTION</scope>
    <source>
        <strain>ATCC 9029 / NRRL 3 / CBS 120.49 / DSM 2466 / N400 / FGSC 732</strain>
    </source>
</reference>
<feature type="signal peptide" evidence="1">
    <location>
        <begin position="1"/>
        <end position="26"/>
    </location>
</feature>
<feature type="chain" id="PRO_0000008034" description="Alpha-L-arabinofuranosidase axhA">
    <location>
        <begin position="27"/>
        <end position="332"/>
    </location>
</feature>
<name>AXHA_ASPNG</name>
<gene>
    <name type="primary">axhA</name>
</gene>
<sequence>MKFLKAKGSLLSSGIYLIALAPFVNAKCALPSTYSWTSTDALATPKSGWTALKDFTDVVSNGKHIVYASTTDTQGNYGSMGFGAFSDWSDMASASQTATSFSAVAPTLFYFQPKSIWVLAYQWGSSTFTYRTSQDPTNVNGWSSEQALFTGKISGSSTGAIDQTVIGDDTNMYLFFAGDNGKIYRSSMSINDFPGSFGSQYEEILSGATNDLFEAVQVYTVDGGEGDSKYLMIVEAIGSTGHRYFRSFTASSLGGEWTAQAASEDQPFAGKANSGATWTDDISHGDLVRNNPDQTMTVDPCNLQLLYQGHDPNSNSDYNLLPWKPGVLTLKQ</sequence>
<proteinExistence type="evidence at transcript level"/>
<dbReference type="EC" id="3.2.1.55"/>
<dbReference type="EMBL" id="Z78011">
    <property type="protein sequence ID" value="CAB01409.1"/>
    <property type="molecule type" value="Genomic_DNA"/>
</dbReference>
<dbReference type="RefSeq" id="XP_001389998.1">
    <property type="nucleotide sequence ID" value="XM_001389961.3"/>
</dbReference>
<dbReference type="SMR" id="P79019"/>
<dbReference type="CAZy" id="GH62">
    <property type="family name" value="Glycoside Hydrolase Family 62"/>
</dbReference>
<dbReference type="PaxDb" id="5061-CADANGAP00003042"/>
<dbReference type="EnsemblFungi" id="CAK38069">
    <property type="protein sequence ID" value="CAK38069"/>
    <property type="gene ID" value="An03g00960"/>
</dbReference>
<dbReference type="GeneID" id="4980084"/>
<dbReference type="KEGG" id="ang:An03g00960"/>
<dbReference type="VEuPathDB" id="FungiDB:An03g00960"/>
<dbReference type="VEuPathDB" id="FungiDB:ASPNIDRAFT2_1159267"/>
<dbReference type="VEuPathDB" id="FungiDB:ATCC64974_83160"/>
<dbReference type="VEuPathDB" id="FungiDB:M747DRAFT_296414"/>
<dbReference type="eggNOG" id="ENOG502QUZT">
    <property type="taxonomic scope" value="Eukaryota"/>
</dbReference>
<dbReference type="OrthoDB" id="3156236at2759"/>
<dbReference type="GO" id="GO:0005576">
    <property type="term" value="C:extracellular region"/>
    <property type="evidence" value="ECO:0007669"/>
    <property type="project" value="UniProtKB-SubCell"/>
</dbReference>
<dbReference type="GO" id="GO:0046556">
    <property type="term" value="F:alpha-L-arabinofuranosidase activity"/>
    <property type="evidence" value="ECO:0007669"/>
    <property type="project" value="UniProtKB-EC"/>
</dbReference>
<dbReference type="GO" id="GO:0046373">
    <property type="term" value="P:L-arabinose metabolic process"/>
    <property type="evidence" value="ECO:0007669"/>
    <property type="project" value="InterPro"/>
</dbReference>
<dbReference type="GO" id="GO:0045493">
    <property type="term" value="P:xylan catabolic process"/>
    <property type="evidence" value="ECO:0007669"/>
    <property type="project" value="UniProtKB-KW"/>
</dbReference>
<dbReference type="CDD" id="cd08987">
    <property type="entry name" value="GH62"/>
    <property type="match status" value="1"/>
</dbReference>
<dbReference type="Gene3D" id="2.115.10.20">
    <property type="entry name" value="Glycosyl hydrolase domain, family 43"/>
    <property type="match status" value="1"/>
</dbReference>
<dbReference type="InterPro" id="IPR005193">
    <property type="entry name" value="GH62_arabinosidase"/>
</dbReference>
<dbReference type="InterPro" id="IPR023296">
    <property type="entry name" value="Glyco_hydro_beta-prop_sf"/>
</dbReference>
<dbReference type="PANTHER" id="PTHR40631">
    <property type="entry name" value="ALPHA-L-ARABINOFURANOSIDASE AXHA-2-RELATED"/>
    <property type="match status" value="1"/>
</dbReference>
<dbReference type="PANTHER" id="PTHR40631:SF1">
    <property type="entry name" value="ALPHA-L-ARABINOFURANOSIDASE AXHA-2-RELATED"/>
    <property type="match status" value="1"/>
</dbReference>
<dbReference type="Pfam" id="PF03664">
    <property type="entry name" value="Glyco_hydro_62"/>
    <property type="match status" value="1"/>
</dbReference>
<dbReference type="SUPFAM" id="SSF75005">
    <property type="entry name" value="Arabinanase/levansucrase/invertase"/>
    <property type="match status" value="1"/>
</dbReference>
<keyword id="KW-0119">Carbohydrate metabolism</keyword>
<keyword id="KW-0326">Glycosidase</keyword>
<keyword id="KW-0378">Hydrolase</keyword>
<keyword id="KW-0624">Polysaccharide degradation</keyword>
<keyword id="KW-0964">Secreted</keyword>
<keyword id="KW-0732">Signal</keyword>
<keyword id="KW-0858">Xylan degradation</keyword>
<organism>
    <name type="scientific">Aspergillus niger</name>
    <dbReference type="NCBI Taxonomy" id="5061"/>
    <lineage>
        <taxon>Eukaryota</taxon>
        <taxon>Fungi</taxon>
        <taxon>Dikarya</taxon>
        <taxon>Ascomycota</taxon>
        <taxon>Pezizomycotina</taxon>
        <taxon>Eurotiomycetes</taxon>
        <taxon>Eurotiomycetidae</taxon>
        <taxon>Eurotiales</taxon>
        <taxon>Aspergillaceae</taxon>
        <taxon>Aspergillus</taxon>
        <taxon>Aspergillus subgen. Circumdati</taxon>
    </lineage>
</organism>
<comment type="function">
    <text>Alpha-L-arabinofuranosidase involved in the hydrolysis of xylan, a major structural heterogeneous polysaccharide found in plant biomass representing the second most abundant polysaccharide in the biosphere, after cellulose. Releases L-arabinose from arabinoxylan.</text>
</comment>
<comment type="catalytic activity">
    <reaction>
        <text>Hydrolysis of terminal non-reducing alpha-L-arabinofuranoside residues in alpha-L-arabinosides.</text>
        <dbReference type="EC" id="3.2.1.55"/>
    </reaction>
</comment>
<comment type="subcellular location">
    <subcellularLocation>
        <location evidence="2">Secreted</location>
    </subcellularLocation>
</comment>
<comment type="induction">
    <text evidence="2">Mainly expressed when grown on xylan and much less on L-arabitol, L-arabinose and D-xylose. Expression is under the control of the carbon catabolite repressor creA.</text>
</comment>
<comment type="similarity">
    <text evidence="3">Belongs to the glycosyl hydrolase 62 family.</text>
</comment>
<accession>P79019</accession>
<evidence type="ECO:0000255" key="1"/>
<evidence type="ECO:0000269" key="2">
    <source>
    </source>
</evidence>
<evidence type="ECO:0000305" key="3"/>